<accession>Q9H161</accession>
<accession>Q96JN7</accession>
<accession>Q9H198</accession>
<accession>Q9HAY9</accession>
<feature type="chain" id="PRO_0000048814" description="Homeobox protein aristaless-like 4">
    <location>
        <begin position="1"/>
        <end position="411"/>
    </location>
</feature>
<feature type="DNA-binding region" description="Homeobox" evidence="2">
    <location>
        <begin position="214"/>
        <end position="273"/>
    </location>
</feature>
<feature type="region of interest" description="Disordered" evidence="4">
    <location>
        <begin position="75"/>
        <end position="145"/>
    </location>
</feature>
<feature type="region of interest" description="Disordered" evidence="4">
    <location>
        <begin position="184"/>
        <end position="219"/>
    </location>
</feature>
<feature type="short sequence motif" description="OAR" evidence="3">
    <location>
        <begin position="391"/>
        <end position="404"/>
    </location>
</feature>
<feature type="compositionally biased region" description="Pro residues" evidence="4">
    <location>
        <begin position="94"/>
        <end position="106"/>
    </location>
</feature>
<feature type="modified residue" description="Phosphoserine" evidence="12">
    <location>
        <position position="200"/>
    </location>
</feature>
<feature type="sequence variant" id="VAR_069279" description="Risk factor for CRS5; results in gain-of-function; dbSNP:rs281865153." evidence="8">
    <original>V</original>
    <variation>F</variation>
    <location>
        <position position="7"/>
    </location>
</feature>
<feature type="sequence variant" id="VAR_010783" description="In dbSNP:rs3824915." evidence="5 6">
    <original>R</original>
    <variation>T</variation>
    <location>
        <position position="35"/>
    </location>
</feature>
<feature type="sequence variant" id="VAR_010784" description="In dbSNP:rs12421995." evidence="6">
    <original>P</original>
    <variation>S</variation>
    <location>
        <position position="102"/>
    </location>
</feature>
<feature type="sequence variant" id="VAR_069280" description="Risk factor for CRS5; results in gain-of-function; dbSNP:rs281865154." evidence="8">
    <original>K</original>
    <variation>E</variation>
    <location>
        <position position="211"/>
    </location>
</feature>
<feature type="sequence variant" id="VAR_010785" description="In PFM2; dbSNP:rs104894193." evidence="6">
    <original>R</original>
    <variation>Q</variation>
    <location>
        <position position="218"/>
    </location>
</feature>
<feature type="sequence variant" id="VAR_058413" description="In dbSNP:rs3824915.">
    <original>R</original>
    <variation>T</variation>
    <location>
        <position position="257"/>
    </location>
</feature>
<feature type="sequence variant" id="VAR_010897" description="In PFM2; dbSNP:rs104894196." evidence="5">
    <original>R</original>
    <variation>P</variation>
    <location>
        <position position="272"/>
    </location>
</feature>
<feature type="sequence variant" id="VAR_069281" description="In dbSNP:rs149897209." evidence="8">
    <original>P</original>
    <variation>L</variation>
    <location>
        <position position="306"/>
    </location>
</feature>
<feature type="sequence conflict" description="In Ref. 1; AAG23961." evidence="9" ref="1">
    <original>D</original>
    <variation>N</variation>
    <location>
        <position position="134"/>
    </location>
</feature>
<feature type="helix" evidence="13">
    <location>
        <begin position="223"/>
        <end position="235"/>
    </location>
</feature>
<feature type="helix" evidence="13">
    <location>
        <begin position="241"/>
        <end position="250"/>
    </location>
</feature>
<feature type="helix" evidence="13">
    <location>
        <begin position="255"/>
        <end position="274"/>
    </location>
</feature>
<comment type="function">
    <text evidence="7">Transcription factor involved in skull and limb development. Plays an essential role in craniofacial development, skin and hair follicle development.</text>
</comment>
<comment type="subunit">
    <text evidence="1">Binds DNA.</text>
</comment>
<comment type="interaction">
    <interactant intactId="EBI-11317841">
        <id>Q9H161</id>
    </interactant>
    <interactant intactId="EBI-10220600">
        <id>Q8NA54</id>
        <label>IQUB</label>
    </interactant>
    <organismsDiffer>false</organismsDiffer>
    <experiments>3</experiments>
</comment>
<comment type="interaction">
    <interactant intactId="EBI-11317841">
        <id>Q9H161</id>
    </interactant>
    <interactant intactId="EBI-3921217">
        <id>Q9HBI0</id>
        <label>PARVG</label>
    </interactant>
    <organismsDiffer>false</organismsDiffer>
    <experiments>3</experiments>
</comment>
<comment type="subcellular location">
    <subcellularLocation>
        <location evidence="2 3 7">Nucleus</location>
    </subcellularLocation>
</comment>
<comment type="tissue specificity">
    <text>Expression is likely to be restricted to bone. Found in parietal bone.</text>
</comment>
<comment type="disease" evidence="5 6">
    <disease id="DI-02131">
        <name>Parietal foramina 2</name>
        <acronym>PFM2</acronym>
        <description>Autosomal dominant disease characterized by oval defects of the parietal bones caused by deficient ossification around the parietal notch, which is normally obliterated during the fifth fetal month. PFM2 is also a clinical feature of Potocki-Shaffer syndrome.</description>
        <dbReference type="MIM" id="609597"/>
    </disease>
    <text>The disease is caused by variants affecting the gene represented in this entry.</text>
</comment>
<comment type="disease" evidence="7">
    <disease id="DI-02709">
        <name>Frontonasal dysplasia 2</name>
        <acronym>FND2</acronym>
        <description>The term frontonasal dysplasia describes an array of abnormalities affecting the eyes, forehead and nose and linked to midfacial dysraphia. The clinical picture is highly variable. Major findings include true ocular hypertelorism; broadening of the nasal root; median facial cleft affecting the nose and/or upper lip and palate; unilateral or bilateral clefting of the alae nasi; lack of formation of the nasal tip; anterior cranium bifidum occultum; a V-shaped or widow's peak frontal hairline.</description>
        <dbReference type="MIM" id="613451"/>
    </disease>
    <text>The disease is caused by variants affecting the gene represented in this entry.</text>
</comment>
<comment type="disease" evidence="10 11">
    <disease id="DI-02006">
        <name>Potocki-Shaffer syndrome</name>
        <acronym>POSHS</acronym>
        <description>A syndrome characterized by foramina parietalia permagna, multiple exostoses, and craniofacial dysostosis, and intellectual disability in some cases.</description>
        <dbReference type="MIM" id="601224"/>
    </disease>
    <text>The disease is caused by variants affecting the gene represented in this entry.</text>
</comment>
<comment type="disease" evidence="8">
    <disease id="DI-03953">
        <name>Craniosynostosis 5</name>
        <acronym>CRS5</acronym>
        <description>A primary abnormality of skull growth involving premature fusion of one or more cranial sutures. The growth velocity of the skull often cannot match that of the developing brain resulting in an abnormal head shape and, in some cases, increased intracranial pressure, which must be treated promptly to avoid permanent neurodevelopmental disability.</description>
        <dbReference type="MIM" id="615529"/>
    </disease>
    <text>Disease susceptibility is associated with variants affecting the gene represented in this entry.</text>
</comment>
<comment type="similarity">
    <text evidence="9">Belongs to the paired homeobox family.</text>
</comment>
<comment type="sequence caution" evidence="9">
    <conflict type="frameshift">
        <sequence resource="EMBL-CDS" id="AAG23961"/>
    </conflict>
</comment>
<comment type="sequence caution" evidence="9">
    <conflict type="erroneous initiation">
        <sequence resource="EMBL-CDS" id="BAB47417"/>
    </conflict>
    <text>Extended N-terminus.</text>
</comment>
<keyword id="KW-0002">3D-structure</keyword>
<keyword id="KW-0010">Activator</keyword>
<keyword id="KW-0989">Craniosynostosis</keyword>
<keyword id="KW-0217">Developmental protein</keyword>
<keyword id="KW-0225">Disease variant</keyword>
<keyword id="KW-0238">DNA-binding</keyword>
<keyword id="KW-0371">Homeobox</keyword>
<keyword id="KW-0539">Nucleus</keyword>
<keyword id="KW-0597">Phosphoprotein</keyword>
<keyword id="KW-1267">Proteomics identification</keyword>
<keyword id="KW-1185">Reference proteome</keyword>
<keyword id="KW-0804">Transcription</keyword>
<keyword id="KW-0805">Transcription regulation</keyword>
<sequence>MNAETCVSYCESPAAAMDAYYSPVSQSREGSSPFRAFPGGDKFGTTFLSAAAKAQGFGDAKSRARYGAGQQDLATPLESGAGARGSFNKFQPQPSTPQPQPPPQPQPQQQQPQPQPPAQPHLYLQRGACKTPPDGSLKLQEGSSGHSAALQVPCYAKESSLGEPELPPDSDTVGMDSSYLSVKEAGVKGPQDRASSDLPSPLEKADSESNKGKKRRNRTTFTSYQLEELEKVFQKTHYPDVYAREQLAMRTDLTEARVQVWFQNRRAKWRKRERFGQMQQVRTHFSTAYELPLLTRAENYAQIQNPSWLGNNGAASPVPACVVPCDPVPACMSPHAHPPGSGASSVTDFLSVSGAGSHVGQTHMGSLFGAASLSPGLNGYELNGEPDRKTSSIAALRMKAKEHSAAISWAT</sequence>
<protein>
    <recommendedName>
        <fullName>Homeobox protein aristaless-like 4</fullName>
    </recommendedName>
</protein>
<proteinExistence type="evidence at protein level"/>
<name>ALX4_HUMAN</name>
<evidence type="ECO:0000250" key="1"/>
<evidence type="ECO:0000255" key="2">
    <source>
        <dbReference type="PROSITE-ProRule" id="PRU00108"/>
    </source>
</evidence>
<evidence type="ECO:0000255" key="3">
    <source>
        <dbReference type="PROSITE-ProRule" id="PRU00138"/>
    </source>
</evidence>
<evidence type="ECO:0000256" key="4">
    <source>
        <dbReference type="SAM" id="MobiDB-lite"/>
    </source>
</evidence>
<evidence type="ECO:0000269" key="5">
    <source>
    </source>
</evidence>
<evidence type="ECO:0000269" key="6">
    <source>
    </source>
</evidence>
<evidence type="ECO:0000269" key="7">
    <source>
    </source>
</evidence>
<evidence type="ECO:0000269" key="8">
    <source>
    </source>
</evidence>
<evidence type="ECO:0000305" key="9"/>
<evidence type="ECO:0000305" key="10">
    <source>
    </source>
</evidence>
<evidence type="ECO:0000305" key="11">
    <source>
    </source>
</evidence>
<evidence type="ECO:0007744" key="12">
    <source>
    </source>
</evidence>
<evidence type="ECO:0007829" key="13">
    <source>
        <dbReference type="PDB" id="8OSB"/>
    </source>
</evidence>
<organism>
    <name type="scientific">Homo sapiens</name>
    <name type="common">Human</name>
    <dbReference type="NCBI Taxonomy" id="9606"/>
    <lineage>
        <taxon>Eukaryota</taxon>
        <taxon>Metazoa</taxon>
        <taxon>Chordata</taxon>
        <taxon>Craniata</taxon>
        <taxon>Vertebrata</taxon>
        <taxon>Euteleostomi</taxon>
        <taxon>Mammalia</taxon>
        <taxon>Eutheria</taxon>
        <taxon>Euarchontoglires</taxon>
        <taxon>Primates</taxon>
        <taxon>Haplorrhini</taxon>
        <taxon>Catarrhini</taxon>
        <taxon>Hominidae</taxon>
        <taxon>Homo</taxon>
    </lineage>
</organism>
<reference key="1">
    <citation type="journal article" date="2000" name="Am. J. Hum. Genet.">
        <title>Haploinsufficiency of ALX4 as a potential cause of parietal foramina in the 11p11.2 contiguous gene-deletion syndrome.</title>
        <authorList>
            <person name="Wu Y.-Q."/>
            <person name="Badano J.L."/>
            <person name="McCaskill C."/>
            <person name="Vogel H."/>
            <person name="Potocki L."/>
            <person name="Shaffer L.G."/>
        </authorList>
    </citation>
    <scope>NUCLEOTIDE SEQUENCE [MRNA]</scope>
    <scope>POSSIBLE INVOLVEMENT IN POSHS</scope>
</reference>
<reference key="2">
    <citation type="journal article" date="2000" name="J. Med. Genet.">
        <title>The ALX4 homeobox gene is mutated in patients with ossification defects of the skull (foramina parietalia permagna, OMIM 168500).</title>
        <authorList>
            <person name="Wuyts W."/>
            <person name="Cleiren E."/>
            <person name="Homfray T."/>
            <person name="Rasore-Quartino A."/>
            <person name="Vanhoenacker F."/>
            <person name="Van Hul W."/>
        </authorList>
    </citation>
    <scope>NUCLEOTIDE SEQUENCE [GENOMIC DNA]</scope>
    <scope>VARIANT THR-35</scope>
    <scope>VARIANT PFM2 PRO-272</scope>
</reference>
<reference key="3">
    <citation type="journal article" date="2001" name="Nat. Genet.">
        <title>Haploinsufficiency of the human homeobox gene ALX4 causes skull ossification defects.</title>
        <authorList>
            <person name="Mavrogiannis L.A."/>
            <person name="Antonopoulou I."/>
            <person name="Baxova A."/>
            <person name="Kutilek S."/>
            <person name="Kim C.A."/>
            <person name="Sugayama S.M."/>
            <person name="Salamanca A."/>
            <person name="Wall S.A."/>
            <person name="Morriss-Kay G.M."/>
            <person name="Wilkie A.O.M."/>
        </authorList>
    </citation>
    <scope>NUCLEOTIDE SEQUENCE [GENOMIC DNA / MRNA]</scope>
    <scope>VARIANTS THR-35 AND SER-102</scope>
    <scope>VARIANT PFM2 GLN-218</scope>
</reference>
<reference key="4">
    <citation type="journal article" date="2001" name="DNA Res.">
        <title>Prediction of the coding sequences of unidentified human genes. XX. The complete sequences of 100 new cDNA clones from brain which code for large proteins in vitro.</title>
        <authorList>
            <person name="Nagase T."/>
            <person name="Nakayama M."/>
            <person name="Nakajima D."/>
            <person name="Kikuno R."/>
            <person name="Ohara O."/>
        </authorList>
    </citation>
    <scope>NUCLEOTIDE SEQUENCE [LARGE SCALE MRNA]</scope>
    <source>
        <tissue>Brain</tissue>
    </source>
</reference>
<reference key="5">
    <citation type="journal article" date="2001" name="Clin. Genet.">
        <title>Familial case of Potocki-Shaffer syndrome associated with microdeletion of EXT2 and ALX4.</title>
        <authorList>
            <person name="Hall C.R."/>
            <person name="Wu Y."/>
            <person name="Shaffer L.G."/>
            <person name="Hecht J.T."/>
        </authorList>
    </citation>
    <scope>POSSIBLE INVOLVEMENT IN POSHS</scope>
</reference>
<reference key="6">
    <citation type="journal article" date="2009" name="Hum. Mol. Genet.">
        <title>ALX4 dysfunction disrupts craniofacial and epidermal development.</title>
        <authorList>
            <person name="Kayserili H."/>
            <person name="Uz E."/>
            <person name="Niessen C."/>
            <person name="Vargel I."/>
            <person name="Alanay Y."/>
            <person name="Tuncbilek G."/>
            <person name="Yigit G."/>
            <person name="Uyguner O."/>
            <person name="Candan S."/>
            <person name="Okur H."/>
            <person name="Kaygin S."/>
            <person name="Balci S."/>
            <person name="Mavili E."/>
            <person name="Alikasifoglu M."/>
            <person name="Haase I."/>
            <person name="Wollnik B."/>
            <person name="Akarsu N.A."/>
        </authorList>
    </citation>
    <scope>INVOLVEMENT IN FND2</scope>
    <scope>FUNCTION</scope>
    <scope>SUBCELLULAR LOCATION</scope>
</reference>
<reference key="7">
    <citation type="journal article" date="2013" name="J. Proteome Res.">
        <title>Toward a comprehensive characterization of a human cancer cell phosphoproteome.</title>
        <authorList>
            <person name="Zhou H."/>
            <person name="Di Palma S."/>
            <person name="Preisinger C."/>
            <person name="Peng M."/>
            <person name="Polat A.N."/>
            <person name="Heck A.J."/>
            <person name="Mohammed S."/>
        </authorList>
    </citation>
    <scope>PHOSPHORYLATION [LARGE SCALE ANALYSIS] AT SER-200</scope>
    <scope>IDENTIFICATION BY MASS SPECTROMETRY [LARGE SCALE ANALYSIS]</scope>
    <source>
        <tissue>Erythroleukemia</tissue>
    </source>
</reference>
<reference key="8">
    <citation type="journal article" date="2012" name="Hum. Mutat.">
        <title>ALX4 gain-of-function mutations in nonsyndromic craniosynostosis.</title>
        <authorList>
            <person name="Yagnik G."/>
            <person name="Ghuman A."/>
            <person name="Kim S."/>
            <person name="Stevens C.G."/>
            <person name="Kimonis V."/>
            <person name="Stoler J."/>
            <person name="Sanchez-Lara P.A."/>
            <person name="Bernstein J.A."/>
            <person name="Naydenov C."/>
            <person name="Drissi H."/>
            <person name="Cunningham M.L."/>
            <person name="Kim J."/>
            <person name="Boyadjiev S.A."/>
        </authorList>
    </citation>
    <scope>VARIANTS PHE-7; GLU-211 AND LEU-306</scope>
    <scope>CHARACTERIZATION OF VARIANTS PHE-7; GLU-211 AND LEU-306</scope>
    <scope>INVOLVEMENT IN CRS5</scope>
</reference>
<gene>
    <name type="primary">ALX4</name>
    <name type="synonym">KIAA1788</name>
</gene>
<dbReference type="EMBL" id="AF294629">
    <property type="protein sequence ID" value="AAG23961.1"/>
    <property type="status" value="ALT_FRAME"/>
    <property type="molecule type" value="mRNA"/>
</dbReference>
<dbReference type="EMBL" id="AF308822">
    <property type="protein sequence ID" value="AAK38835.1"/>
    <property type="molecule type" value="Genomic_DNA"/>
</dbReference>
<dbReference type="EMBL" id="AF308823">
    <property type="protein sequence ID" value="AAK38835.1"/>
    <property type="status" value="JOINED"/>
    <property type="molecule type" value="Genomic_DNA"/>
</dbReference>
<dbReference type="EMBL" id="AF308824">
    <property type="protein sequence ID" value="AAK38835.1"/>
    <property type="status" value="JOINED"/>
    <property type="molecule type" value="Genomic_DNA"/>
</dbReference>
<dbReference type="EMBL" id="AF308825">
    <property type="protein sequence ID" value="AAK38835.1"/>
    <property type="status" value="JOINED"/>
    <property type="molecule type" value="Genomic_DNA"/>
</dbReference>
<dbReference type="EMBL" id="AJ404888">
    <property type="protein sequence ID" value="CAC15060.1"/>
    <property type="molecule type" value="mRNA"/>
</dbReference>
<dbReference type="EMBL" id="AJ279074">
    <property type="protein sequence ID" value="CAC15120.1"/>
    <property type="molecule type" value="Genomic_DNA"/>
</dbReference>
<dbReference type="EMBL" id="AJ279075">
    <property type="protein sequence ID" value="CAC15120.1"/>
    <property type="status" value="JOINED"/>
    <property type="molecule type" value="Genomic_DNA"/>
</dbReference>
<dbReference type="EMBL" id="AJ279076">
    <property type="protein sequence ID" value="CAC15120.1"/>
    <property type="status" value="JOINED"/>
    <property type="molecule type" value="Genomic_DNA"/>
</dbReference>
<dbReference type="EMBL" id="AJ279077">
    <property type="protein sequence ID" value="CAC15120.1"/>
    <property type="status" value="JOINED"/>
    <property type="molecule type" value="Genomic_DNA"/>
</dbReference>
<dbReference type="EMBL" id="AB058691">
    <property type="protein sequence ID" value="BAB47417.1"/>
    <property type="status" value="ALT_INIT"/>
    <property type="molecule type" value="mRNA"/>
</dbReference>
<dbReference type="CCDS" id="CCDS31468.1"/>
<dbReference type="RefSeq" id="NP_068745.2">
    <property type="nucleotide sequence ID" value="NM_021926.4"/>
</dbReference>
<dbReference type="PDB" id="2M0C">
    <property type="method" value="NMR"/>
    <property type="chains" value="A=209-280"/>
</dbReference>
<dbReference type="PDB" id="8OSB">
    <property type="method" value="X-ray"/>
    <property type="resolution" value="2.90 A"/>
    <property type="chains" value="E=216-277"/>
</dbReference>
<dbReference type="PDBsum" id="2M0C"/>
<dbReference type="PDBsum" id="8OSB"/>
<dbReference type="BMRB" id="Q9H161"/>
<dbReference type="SMR" id="Q9H161"/>
<dbReference type="BioGRID" id="121938">
    <property type="interactions" value="18"/>
</dbReference>
<dbReference type="FunCoup" id="Q9H161">
    <property type="interactions" value="1306"/>
</dbReference>
<dbReference type="IntAct" id="Q9H161">
    <property type="interactions" value="17"/>
</dbReference>
<dbReference type="MINT" id="Q9H161"/>
<dbReference type="STRING" id="9606.ENSP00000498217"/>
<dbReference type="GlyGen" id="Q9H161">
    <property type="glycosylation" value="2 sites, 1 O-linked glycan (2 sites)"/>
</dbReference>
<dbReference type="iPTMnet" id="Q9H161"/>
<dbReference type="PhosphoSitePlus" id="Q9H161"/>
<dbReference type="BioMuta" id="ALX4"/>
<dbReference type="DMDM" id="254763249"/>
<dbReference type="jPOST" id="Q9H161"/>
<dbReference type="MassIVE" id="Q9H161"/>
<dbReference type="PaxDb" id="9606-ENSP00000332744"/>
<dbReference type="PeptideAtlas" id="Q9H161"/>
<dbReference type="ProteomicsDB" id="80361"/>
<dbReference type="Antibodypedia" id="13210">
    <property type="antibodies" value="311 antibodies from 23 providers"/>
</dbReference>
<dbReference type="DNASU" id="60529"/>
<dbReference type="Ensembl" id="ENST00000652299.1">
    <property type="protein sequence ID" value="ENSP00000498217.1"/>
    <property type="gene ID" value="ENSG00000052850.8"/>
</dbReference>
<dbReference type="GeneID" id="60529"/>
<dbReference type="KEGG" id="hsa:60529"/>
<dbReference type="MANE-Select" id="ENST00000652299.1">
    <property type="protein sequence ID" value="ENSP00000498217.1"/>
    <property type="RefSeq nucleotide sequence ID" value="NM_021926.4"/>
    <property type="RefSeq protein sequence ID" value="NP_068745.2"/>
</dbReference>
<dbReference type="UCSC" id="uc001myb.4">
    <property type="organism name" value="human"/>
</dbReference>
<dbReference type="AGR" id="HGNC:450"/>
<dbReference type="CTD" id="60529"/>
<dbReference type="DisGeNET" id="60529"/>
<dbReference type="GeneCards" id="ALX4"/>
<dbReference type="GeneReviews" id="ALX4"/>
<dbReference type="HGNC" id="HGNC:450">
    <property type="gene designation" value="ALX4"/>
</dbReference>
<dbReference type="HPA" id="ENSG00000052850">
    <property type="expression patterns" value="Tissue enhanced (breast, choroid plexus)"/>
</dbReference>
<dbReference type="MalaCards" id="ALX4"/>
<dbReference type="MIM" id="601224">
    <property type="type" value="phenotype"/>
</dbReference>
<dbReference type="MIM" id="605420">
    <property type="type" value="gene"/>
</dbReference>
<dbReference type="MIM" id="609597">
    <property type="type" value="phenotype"/>
</dbReference>
<dbReference type="MIM" id="613451">
    <property type="type" value="phenotype"/>
</dbReference>
<dbReference type="MIM" id="615529">
    <property type="type" value="phenotype"/>
</dbReference>
<dbReference type="neXtProt" id="NX_Q9H161"/>
<dbReference type="OpenTargets" id="ENSG00000052850"/>
<dbReference type="Orphanet" id="60015">
    <property type="disease" value="Enlarged parietal foramina"/>
</dbReference>
<dbReference type="Orphanet" id="228390">
    <property type="disease" value="Frontonasal dysplasia-alopecia-genital anomalies syndrome"/>
</dbReference>
<dbReference type="Orphanet" id="35093">
    <property type="disease" value="Non-syndromic sagittal craniosynostosis"/>
</dbReference>
<dbReference type="Orphanet" id="52022">
    <property type="disease" value="Potocki-Shaffer syndrome"/>
</dbReference>
<dbReference type="PharmGKB" id="PA24755"/>
<dbReference type="VEuPathDB" id="HostDB:ENSG00000052850"/>
<dbReference type="eggNOG" id="KOG0490">
    <property type="taxonomic scope" value="Eukaryota"/>
</dbReference>
<dbReference type="GeneTree" id="ENSGT00940000159662"/>
<dbReference type="HOGENOM" id="CLU_047013_0_0_1"/>
<dbReference type="InParanoid" id="Q9H161"/>
<dbReference type="OMA" id="PCYGKDN"/>
<dbReference type="OrthoDB" id="6159439at2759"/>
<dbReference type="PAN-GO" id="Q9H161">
    <property type="GO annotations" value="3 GO annotations based on evolutionary models"/>
</dbReference>
<dbReference type="PhylomeDB" id="Q9H161"/>
<dbReference type="TreeFam" id="TF350743"/>
<dbReference type="PathwayCommons" id="Q9H161"/>
<dbReference type="SignaLink" id="Q9H161"/>
<dbReference type="SIGNOR" id="Q9H161"/>
<dbReference type="BioGRID-ORCS" id="60529">
    <property type="hits" value="13 hits in 1169 CRISPR screens"/>
</dbReference>
<dbReference type="ChiTaRS" id="ALX4">
    <property type="organism name" value="human"/>
</dbReference>
<dbReference type="EvolutionaryTrace" id="Q9H161"/>
<dbReference type="GeneWiki" id="ALX4"/>
<dbReference type="GenomeRNAi" id="60529"/>
<dbReference type="Pharos" id="Q9H161">
    <property type="development level" value="Tbio"/>
</dbReference>
<dbReference type="PRO" id="PR:Q9H161"/>
<dbReference type="Proteomes" id="UP000005640">
    <property type="component" value="Chromosome 11"/>
</dbReference>
<dbReference type="RNAct" id="Q9H161">
    <property type="molecule type" value="protein"/>
</dbReference>
<dbReference type="Bgee" id="ENSG00000052850">
    <property type="expression patterns" value="Expressed in primordial germ cell in gonad and 57 other cell types or tissues"/>
</dbReference>
<dbReference type="GO" id="GO:0000785">
    <property type="term" value="C:chromatin"/>
    <property type="evidence" value="ECO:0000247"/>
    <property type="project" value="NTNU_SB"/>
</dbReference>
<dbReference type="GO" id="GO:0005654">
    <property type="term" value="C:nucleoplasm"/>
    <property type="evidence" value="ECO:0000314"/>
    <property type="project" value="HPA"/>
</dbReference>
<dbReference type="GO" id="GO:0005634">
    <property type="term" value="C:nucleus"/>
    <property type="evidence" value="ECO:0000314"/>
    <property type="project" value="UniProtKB"/>
</dbReference>
<dbReference type="GO" id="GO:0005667">
    <property type="term" value="C:transcription regulator complex"/>
    <property type="evidence" value="ECO:0007669"/>
    <property type="project" value="Ensembl"/>
</dbReference>
<dbReference type="GO" id="GO:0003677">
    <property type="term" value="F:DNA binding"/>
    <property type="evidence" value="ECO:0000303"/>
    <property type="project" value="UniProtKB"/>
</dbReference>
<dbReference type="GO" id="GO:0001228">
    <property type="term" value="F:DNA-binding transcription activator activity, RNA polymerase II-specific"/>
    <property type="evidence" value="ECO:0000318"/>
    <property type="project" value="GO_Central"/>
</dbReference>
<dbReference type="GO" id="GO:0000981">
    <property type="term" value="F:DNA-binding transcription factor activity, RNA polymerase II-specific"/>
    <property type="evidence" value="ECO:0000247"/>
    <property type="project" value="NTNU_SB"/>
</dbReference>
<dbReference type="GO" id="GO:0071837">
    <property type="term" value="F:HMG box domain binding"/>
    <property type="evidence" value="ECO:0007669"/>
    <property type="project" value="Ensembl"/>
</dbReference>
<dbReference type="GO" id="GO:0000977">
    <property type="term" value="F:RNA polymerase II transcription regulatory region sequence-specific DNA binding"/>
    <property type="evidence" value="ECO:0000318"/>
    <property type="project" value="GO_Central"/>
</dbReference>
<dbReference type="GO" id="GO:1990837">
    <property type="term" value="F:sequence-specific double-stranded DNA binding"/>
    <property type="evidence" value="ECO:0000314"/>
    <property type="project" value="ARUK-UCL"/>
</dbReference>
<dbReference type="GO" id="GO:0009952">
    <property type="term" value="P:anterior/posterior pattern specification"/>
    <property type="evidence" value="ECO:0007669"/>
    <property type="project" value="Ensembl"/>
</dbReference>
<dbReference type="GO" id="GO:0048565">
    <property type="term" value="P:digestive tract development"/>
    <property type="evidence" value="ECO:0007669"/>
    <property type="project" value="Ensembl"/>
</dbReference>
<dbReference type="GO" id="GO:0042733">
    <property type="term" value="P:embryonic digit morphogenesis"/>
    <property type="evidence" value="ECO:0007669"/>
    <property type="project" value="Ensembl"/>
</dbReference>
<dbReference type="GO" id="GO:0035115">
    <property type="term" value="P:embryonic forelimb morphogenesis"/>
    <property type="evidence" value="ECO:0007669"/>
    <property type="project" value="Ensembl"/>
</dbReference>
<dbReference type="GO" id="GO:0035116">
    <property type="term" value="P:embryonic hindlimb morphogenesis"/>
    <property type="evidence" value="ECO:0007669"/>
    <property type="project" value="Ensembl"/>
</dbReference>
<dbReference type="GO" id="GO:0048704">
    <property type="term" value="P:embryonic skeletal system morphogenesis"/>
    <property type="evidence" value="ECO:0007669"/>
    <property type="project" value="Ensembl"/>
</dbReference>
<dbReference type="GO" id="GO:0001942">
    <property type="term" value="P:hair follicle development"/>
    <property type="evidence" value="ECO:0000315"/>
    <property type="project" value="UniProtKB"/>
</dbReference>
<dbReference type="GO" id="GO:0007517">
    <property type="term" value="P:muscle organ development"/>
    <property type="evidence" value="ECO:0007669"/>
    <property type="project" value="Ensembl"/>
</dbReference>
<dbReference type="GO" id="GO:0009791">
    <property type="term" value="P:post-embryonic development"/>
    <property type="evidence" value="ECO:0007669"/>
    <property type="project" value="Ensembl"/>
</dbReference>
<dbReference type="GO" id="GO:0042981">
    <property type="term" value="P:regulation of apoptotic process"/>
    <property type="evidence" value="ECO:0007669"/>
    <property type="project" value="Ensembl"/>
</dbReference>
<dbReference type="GO" id="GO:0006357">
    <property type="term" value="P:regulation of transcription by RNA polymerase II"/>
    <property type="evidence" value="ECO:0000318"/>
    <property type="project" value="GO_Central"/>
</dbReference>
<dbReference type="GO" id="GO:0060021">
    <property type="term" value="P:roof of mouth development"/>
    <property type="evidence" value="ECO:0007669"/>
    <property type="project" value="Ensembl"/>
</dbReference>
<dbReference type="GO" id="GO:0001501">
    <property type="term" value="P:skeletal system development"/>
    <property type="evidence" value="ECO:0000303"/>
    <property type="project" value="UniProtKB"/>
</dbReference>
<dbReference type="CDD" id="cd00086">
    <property type="entry name" value="homeodomain"/>
    <property type="match status" value="1"/>
</dbReference>
<dbReference type="FunFam" id="1.10.10.60:FF:000127">
    <property type="entry name" value="homeobox protein aristaless-like 4"/>
    <property type="match status" value="1"/>
</dbReference>
<dbReference type="Gene3D" id="1.10.10.60">
    <property type="entry name" value="Homeodomain-like"/>
    <property type="match status" value="1"/>
</dbReference>
<dbReference type="InterPro" id="IPR001356">
    <property type="entry name" value="HD"/>
</dbReference>
<dbReference type="InterPro" id="IPR017970">
    <property type="entry name" value="Homeobox_CS"/>
</dbReference>
<dbReference type="InterPro" id="IPR009057">
    <property type="entry name" value="Homeodomain-like_sf"/>
</dbReference>
<dbReference type="InterPro" id="IPR003654">
    <property type="entry name" value="OAR_dom"/>
</dbReference>
<dbReference type="InterPro" id="IPR050649">
    <property type="entry name" value="Paired_Homeobox_TFs"/>
</dbReference>
<dbReference type="PANTHER" id="PTHR24329">
    <property type="entry name" value="HOMEOBOX PROTEIN ARISTALESS"/>
    <property type="match status" value="1"/>
</dbReference>
<dbReference type="PANTHER" id="PTHR24329:SF322">
    <property type="entry name" value="HOMEOBOX PROTEIN ARISTALESS-LIKE 4"/>
    <property type="match status" value="1"/>
</dbReference>
<dbReference type="Pfam" id="PF00046">
    <property type="entry name" value="Homeodomain"/>
    <property type="match status" value="1"/>
</dbReference>
<dbReference type="Pfam" id="PF03826">
    <property type="entry name" value="OAR"/>
    <property type="match status" value="1"/>
</dbReference>
<dbReference type="SMART" id="SM00389">
    <property type="entry name" value="HOX"/>
    <property type="match status" value="1"/>
</dbReference>
<dbReference type="SUPFAM" id="SSF46689">
    <property type="entry name" value="Homeodomain-like"/>
    <property type="match status" value="1"/>
</dbReference>
<dbReference type="PROSITE" id="PS00027">
    <property type="entry name" value="HOMEOBOX_1"/>
    <property type="match status" value="1"/>
</dbReference>
<dbReference type="PROSITE" id="PS50071">
    <property type="entry name" value="HOMEOBOX_2"/>
    <property type="match status" value="1"/>
</dbReference>
<dbReference type="PROSITE" id="PS50803">
    <property type="entry name" value="OAR"/>
    <property type="match status" value="1"/>
</dbReference>